<protein>
    <recommendedName>
        <fullName evidence="1">NADPH-dependent 7-cyano-7-deazaguanine reductase</fullName>
        <ecNumber evidence="1">1.7.1.13</ecNumber>
    </recommendedName>
    <alternativeName>
        <fullName evidence="1">7-cyano-7-carbaguanine reductase</fullName>
    </alternativeName>
    <alternativeName>
        <fullName evidence="1">NADPH-dependent nitrile oxidoreductase</fullName>
    </alternativeName>
    <alternativeName>
        <fullName evidence="1">PreQ(0) reductase</fullName>
    </alternativeName>
</protein>
<gene>
    <name evidence="1" type="primary">queF</name>
    <name type="ordered locus">DP0168</name>
</gene>
<accession>Q6ARX8</accession>
<feature type="chain" id="PRO_0000163029" description="NADPH-dependent 7-cyano-7-deazaguanine reductase">
    <location>
        <begin position="1"/>
        <end position="276"/>
    </location>
</feature>
<feature type="active site" description="Thioimide intermediate" evidence="1">
    <location>
        <position position="184"/>
    </location>
</feature>
<feature type="active site" description="Proton donor" evidence="1">
    <location>
        <position position="191"/>
    </location>
</feature>
<feature type="binding site" evidence="1">
    <location>
        <begin position="83"/>
        <end position="85"/>
    </location>
    <ligand>
        <name>substrate</name>
    </ligand>
</feature>
<feature type="binding site" evidence="1">
    <location>
        <begin position="85"/>
        <end position="86"/>
    </location>
    <ligand>
        <name>NADPH</name>
        <dbReference type="ChEBI" id="CHEBI:57783"/>
    </ligand>
</feature>
<feature type="binding site" evidence="1">
    <location>
        <begin position="223"/>
        <end position="224"/>
    </location>
    <ligand>
        <name>substrate</name>
    </ligand>
</feature>
<feature type="binding site" evidence="1">
    <location>
        <begin position="252"/>
        <end position="253"/>
    </location>
    <ligand>
        <name>NADPH</name>
        <dbReference type="ChEBI" id="CHEBI:57783"/>
    </ligand>
</feature>
<name>QUEF_DESPS</name>
<dbReference type="EC" id="1.7.1.13" evidence="1"/>
<dbReference type="EMBL" id="CR522870">
    <property type="protein sequence ID" value="CAG34897.1"/>
    <property type="molecule type" value="Genomic_DNA"/>
</dbReference>
<dbReference type="RefSeq" id="WP_011187413.1">
    <property type="nucleotide sequence ID" value="NC_006138.1"/>
</dbReference>
<dbReference type="SMR" id="Q6ARX8"/>
<dbReference type="STRING" id="177439.DP0168"/>
<dbReference type="KEGG" id="dps:DP0168"/>
<dbReference type="eggNOG" id="COG0780">
    <property type="taxonomic scope" value="Bacteria"/>
</dbReference>
<dbReference type="eggNOG" id="COG2904">
    <property type="taxonomic scope" value="Bacteria"/>
</dbReference>
<dbReference type="HOGENOM" id="CLU_054738_0_0_7"/>
<dbReference type="OrthoDB" id="9789995at2"/>
<dbReference type="UniPathway" id="UPA00392"/>
<dbReference type="Proteomes" id="UP000000602">
    <property type="component" value="Chromosome"/>
</dbReference>
<dbReference type="GO" id="GO:0005737">
    <property type="term" value="C:cytoplasm"/>
    <property type="evidence" value="ECO:0007669"/>
    <property type="project" value="UniProtKB-SubCell"/>
</dbReference>
<dbReference type="GO" id="GO:0033739">
    <property type="term" value="F:preQ1 synthase activity"/>
    <property type="evidence" value="ECO:0007669"/>
    <property type="project" value="UniProtKB-EC"/>
</dbReference>
<dbReference type="GO" id="GO:0008616">
    <property type="term" value="P:queuosine biosynthetic process"/>
    <property type="evidence" value="ECO:0007669"/>
    <property type="project" value="UniProtKB-UniPathway"/>
</dbReference>
<dbReference type="Gene3D" id="3.30.1130.10">
    <property type="match status" value="2"/>
</dbReference>
<dbReference type="HAMAP" id="MF_00817">
    <property type="entry name" value="QueF_type2"/>
    <property type="match status" value="1"/>
</dbReference>
<dbReference type="InterPro" id="IPR043133">
    <property type="entry name" value="GTP-CH-I_C/QueF"/>
</dbReference>
<dbReference type="InterPro" id="IPR050084">
    <property type="entry name" value="NADPH_dep_7-cyano-7-deazaG_red"/>
</dbReference>
<dbReference type="InterPro" id="IPR029500">
    <property type="entry name" value="QueF"/>
</dbReference>
<dbReference type="InterPro" id="IPR029139">
    <property type="entry name" value="QueF_N"/>
</dbReference>
<dbReference type="InterPro" id="IPR016428">
    <property type="entry name" value="QueF_type2"/>
</dbReference>
<dbReference type="NCBIfam" id="TIGR03138">
    <property type="entry name" value="QueF"/>
    <property type="match status" value="1"/>
</dbReference>
<dbReference type="PANTHER" id="PTHR34354">
    <property type="entry name" value="NADPH-DEPENDENT 7-CYANO-7-DEAZAGUANINE REDUCTASE"/>
    <property type="match status" value="1"/>
</dbReference>
<dbReference type="PANTHER" id="PTHR34354:SF1">
    <property type="entry name" value="NADPH-DEPENDENT 7-CYANO-7-DEAZAGUANINE REDUCTASE"/>
    <property type="match status" value="1"/>
</dbReference>
<dbReference type="Pfam" id="PF14489">
    <property type="entry name" value="QueF"/>
    <property type="match status" value="1"/>
</dbReference>
<dbReference type="Pfam" id="PF14819">
    <property type="entry name" value="QueF_N"/>
    <property type="match status" value="1"/>
</dbReference>
<dbReference type="PIRSF" id="PIRSF004750">
    <property type="entry name" value="Nitrile_oxidored_YqcD_prd"/>
    <property type="match status" value="1"/>
</dbReference>
<dbReference type="SUPFAM" id="SSF55620">
    <property type="entry name" value="Tetrahydrobiopterin biosynthesis enzymes-like"/>
    <property type="match status" value="1"/>
</dbReference>
<organism>
    <name type="scientific">Desulfotalea psychrophila (strain LSv54 / DSM 12343)</name>
    <dbReference type="NCBI Taxonomy" id="177439"/>
    <lineage>
        <taxon>Bacteria</taxon>
        <taxon>Pseudomonadati</taxon>
        <taxon>Thermodesulfobacteriota</taxon>
        <taxon>Desulfobulbia</taxon>
        <taxon>Desulfobulbales</taxon>
        <taxon>Desulfocapsaceae</taxon>
        <taxon>Desulfotalea</taxon>
    </lineage>
</organism>
<keyword id="KW-0963">Cytoplasm</keyword>
<keyword id="KW-0521">NADP</keyword>
<keyword id="KW-0560">Oxidoreductase</keyword>
<keyword id="KW-0671">Queuosine biosynthesis</keyword>
<keyword id="KW-1185">Reference proteome</keyword>
<proteinExistence type="inferred from homology"/>
<reference key="1">
    <citation type="journal article" date="2004" name="Environ. Microbiol.">
        <title>The genome of Desulfotalea psychrophila, a sulfate-reducing bacterium from permanently cold Arctic sediments.</title>
        <authorList>
            <person name="Rabus R."/>
            <person name="Ruepp A."/>
            <person name="Frickey T."/>
            <person name="Rattei T."/>
            <person name="Fartmann B."/>
            <person name="Stark M."/>
            <person name="Bauer M."/>
            <person name="Zibat A."/>
            <person name="Lombardot T."/>
            <person name="Becker I."/>
            <person name="Amann J."/>
            <person name="Gellner K."/>
            <person name="Teeling H."/>
            <person name="Leuschner W.D."/>
            <person name="Gloeckner F.-O."/>
            <person name="Lupas A.N."/>
            <person name="Amann R."/>
            <person name="Klenk H.-P."/>
        </authorList>
    </citation>
    <scope>NUCLEOTIDE SEQUENCE [LARGE SCALE GENOMIC DNA]</scope>
    <source>
        <strain>DSM 12343 / LSv54</strain>
    </source>
</reference>
<evidence type="ECO:0000255" key="1">
    <source>
        <dbReference type="HAMAP-Rule" id="MF_00817"/>
    </source>
</evidence>
<comment type="function">
    <text evidence="1">Catalyzes the NADPH-dependent reduction of 7-cyano-7-deazaguanine (preQ0) to 7-aminomethyl-7-deazaguanine (preQ1).</text>
</comment>
<comment type="catalytic activity">
    <reaction evidence="1">
        <text>7-aminomethyl-7-carbaguanine + 2 NADP(+) = 7-cyano-7-deazaguanine + 2 NADPH + 3 H(+)</text>
        <dbReference type="Rhea" id="RHEA:13409"/>
        <dbReference type="ChEBI" id="CHEBI:15378"/>
        <dbReference type="ChEBI" id="CHEBI:45075"/>
        <dbReference type="ChEBI" id="CHEBI:57783"/>
        <dbReference type="ChEBI" id="CHEBI:58349"/>
        <dbReference type="ChEBI" id="CHEBI:58703"/>
        <dbReference type="EC" id="1.7.1.13"/>
    </reaction>
</comment>
<comment type="pathway">
    <text evidence="1">tRNA modification; tRNA-queuosine biosynthesis.</text>
</comment>
<comment type="subunit">
    <text evidence="1">Homodimer.</text>
</comment>
<comment type="subcellular location">
    <subcellularLocation>
        <location evidence="1">Cytoplasm</location>
    </subcellularLocation>
</comment>
<comment type="similarity">
    <text evidence="1">Belongs to the GTP cyclohydrolase I family. QueF type 2 subfamily.</text>
</comment>
<sequence>MTENINAGIPLGKQVGHSETYDPSHLFPVARREARKSLGLADDLPFSGPDIWNAYELSWLDSKGKPCVALGEITFPCTSENIIESKSLKLYLNSFNLTRFTSTARVKEIIREDLSRVAGAEVEVKILTPEEFTEVTISAPEGSCIDDLELEEEINAYRPTANYLSTGPEETEEELYTNLLRTNCPVTGQPDWATVIINYRGKAIDQRGLLRYIISFRQHEGFHENCVERIFMDILNRCAPARLTVYARFTRRGGLDINPYRTTHAEHFVNLRLARQ</sequence>